<accession>Q88VS2</accession>
<accession>F9UPT0</accession>
<feature type="chain" id="PRO_0000072845" description="Glycine--tRNA ligase alpha subunit">
    <location>
        <begin position="1"/>
        <end position="299"/>
    </location>
</feature>
<comment type="catalytic activity">
    <reaction evidence="1">
        <text>tRNA(Gly) + glycine + ATP = glycyl-tRNA(Gly) + AMP + diphosphate</text>
        <dbReference type="Rhea" id="RHEA:16013"/>
        <dbReference type="Rhea" id="RHEA-COMP:9664"/>
        <dbReference type="Rhea" id="RHEA-COMP:9683"/>
        <dbReference type="ChEBI" id="CHEBI:30616"/>
        <dbReference type="ChEBI" id="CHEBI:33019"/>
        <dbReference type="ChEBI" id="CHEBI:57305"/>
        <dbReference type="ChEBI" id="CHEBI:78442"/>
        <dbReference type="ChEBI" id="CHEBI:78522"/>
        <dbReference type="ChEBI" id="CHEBI:456215"/>
        <dbReference type="EC" id="6.1.1.14"/>
    </reaction>
</comment>
<comment type="subunit">
    <text evidence="1">Tetramer of two alpha and two beta subunits.</text>
</comment>
<comment type="subcellular location">
    <subcellularLocation>
        <location evidence="1">Cytoplasm</location>
    </subcellularLocation>
</comment>
<comment type="similarity">
    <text evidence="1">Belongs to the class-II aminoacyl-tRNA synthetase family.</text>
</comment>
<proteinExistence type="evidence at protein level"/>
<protein>
    <recommendedName>
        <fullName evidence="1">Glycine--tRNA ligase alpha subunit</fullName>
        <ecNumber evidence="1">6.1.1.14</ecNumber>
    </recommendedName>
    <alternativeName>
        <fullName evidence="1">Glycyl-tRNA synthetase alpha subunit</fullName>
        <shortName evidence="1">GlyRS</shortName>
    </alternativeName>
</protein>
<evidence type="ECO:0000255" key="1">
    <source>
        <dbReference type="HAMAP-Rule" id="MF_00254"/>
    </source>
</evidence>
<gene>
    <name evidence="1" type="primary">glyQ</name>
    <name type="ordered locus">lp_1965</name>
</gene>
<organism>
    <name type="scientific">Lactiplantibacillus plantarum (strain ATCC BAA-793 / NCIMB 8826 / WCFS1)</name>
    <name type="common">Lactobacillus plantarum</name>
    <dbReference type="NCBI Taxonomy" id="220668"/>
    <lineage>
        <taxon>Bacteria</taxon>
        <taxon>Bacillati</taxon>
        <taxon>Bacillota</taxon>
        <taxon>Bacilli</taxon>
        <taxon>Lactobacillales</taxon>
        <taxon>Lactobacillaceae</taxon>
        <taxon>Lactiplantibacillus</taxon>
    </lineage>
</organism>
<reference key="1">
    <citation type="journal article" date="2003" name="Proc. Natl. Acad. Sci. U.S.A.">
        <title>Complete genome sequence of Lactobacillus plantarum WCFS1.</title>
        <authorList>
            <person name="Kleerebezem M."/>
            <person name="Boekhorst J."/>
            <person name="van Kranenburg R."/>
            <person name="Molenaar D."/>
            <person name="Kuipers O.P."/>
            <person name="Leer R."/>
            <person name="Tarchini R."/>
            <person name="Peters S.A."/>
            <person name="Sandbrink H.M."/>
            <person name="Fiers M.W.E.J."/>
            <person name="Stiekema W."/>
            <person name="Klein Lankhorst R.M."/>
            <person name="Bron P.A."/>
            <person name="Hoffer S.M."/>
            <person name="Nierop Groot M.N."/>
            <person name="Kerkhoven R."/>
            <person name="De Vries M."/>
            <person name="Ursing B."/>
            <person name="De Vos W.M."/>
            <person name="Siezen R.J."/>
        </authorList>
    </citation>
    <scope>NUCLEOTIDE SEQUENCE [LARGE SCALE GENOMIC DNA]</scope>
    <source>
        <strain>ATCC BAA-793 / NCIMB 8826 / WCFS1</strain>
    </source>
</reference>
<reference key="2">
    <citation type="journal article" date="2012" name="J. Bacteriol.">
        <title>Complete resequencing and reannotation of the Lactobacillus plantarum WCFS1 genome.</title>
        <authorList>
            <person name="Siezen R.J."/>
            <person name="Francke C."/>
            <person name="Renckens B."/>
            <person name="Boekhorst J."/>
            <person name="Wels M."/>
            <person name="Kleerebezem M."/>
            <person name="van Hijum S.A."/>
        </authorList>
    </citation>
    <scope>NUCLEOTIDE SEQUENCE [LARGE SCALE GENOMIC DNA]</scope>
    <scope>GENOME REANNOTATION</scope>
    <source>
        <strain>ATCC BAA-793 / NCIMB 8826 / WCFS1</strain>
    </source>
</reference>
<keyword id="KW-0002">3D-structure</keyword>
<keyword id="KW-0030">Aminoacyl-tRNA synthetase</keyword>
<keyword id="KW-0067">ATP-binding</keyword>
<keyword id="KW-0963">Cytoplasm</keyword>
<keyword id="KW-0436">Ligase</keyword>
<keyword id="KW-0547">Nucleotide-binding</keyword>
<keyword id="KW-0648">Protein biosynthesis</keyword>
<keyword id="KW-1185">Reference proteome</keyword>
<sequence>MSKKLSVQEIILTLQKFWSDQGCMLMQSYDTEKGAGTMSPYTFLRAIGPEPWNAAYVEPSRRPADGRYGENPNRLYQHHQFQVVMKPSPENVQDLYLQSLEKLGINPLEHDIRFVEDNWENPSMGCAGVGWEVWLDGMEISQFTYFQQVGGLEVDPVTSEITYGLERLSSYIQDVNSVFDLEWGDGVKYGDIFLEPEFENSKYAFEDSNEELLLMLFDEYEKEAKRQIKNGLVHPAYDYCLKCSHTFNLMDARGMVSVTERAGYLDRIRNMAKSIAKEFVAQREKRGFPLLKHAQEETK</sequence>
<name>SYGA_LACPL</name>
<dbReference type="EC" id="6.1.1.14" evidence="1"/>
<dbReference type="EMBL" id="AL935263">
    <property type="protein sequence ID" value="CCC79219.1"/>
    <property type="molecule type" value="Genomic_DNA"/>
</dbReference>
<dbReference type="RefSeq" id="WP_003640677.1">
    <property type="nucleotide sequence ID" value="NC_004567.2"/>
</dbReference>
<dbReference type="RefSeq" id="YP_004889733.1">
    <property type="nucleotide sequence ID" value="NC_004567.2"/>
</dbReference>
<dbReference type="PDB" id="8IE2">
    <property type="method" value="X-ray"/>
    <property type="resolution" value="3.60 A"/>
    <property type="chains" value="A/B/C/D=1-299"/>
</dbReference>
<dbReference type="PDBsum" id="8IE2"/>
<dbReference type="SMR" id="Q88VS2"/>
<dbReference type="STRING" id="220668.lp_1965"/>
<dbReference type="EnsemblBacteria" id="CCC79219">
    <property type="protein sequence ID" value="CCC79219"/>
    <property type="gene ID" value="lp_1965"/>
</dbReference>
<dbReference type="GeneID" id="89669275"/>
<dbReference type="KEGG" id="lpl:lp_1965"/>
<dbReference type="PATRIC" id="fig|220668.9.peg.1659"/>
<dbReference type="eggNOG" id="COG0752">
    <property type="taxonomic scope" value="Bacteria"/>
</dbReference>
<dbReference type="HOGENOM" id="CLU_057066_1_0_9"/>
<dbReference type="OrthoDB" id="9802183at2"/>
<dbReference type="PhylomeDB" id="Q88VS2"/>
<dbReference type="Proteomes" id="UP000000432">
    <property type="component" value="Chromosome"/>
</dbReference>
<dbReference type="GO" id="GO:0005829">
    <property type="term" value="C:cytosol"/>
    <property type="evidence" value="ECO:0007669"/>
    <property type="project" value="TreeGrafter"/>
</dbReference>
<dbReference type="GO" id="GO:0005524">
    <property type="term" value="F:ATP binding"/>
    <property type="evidence" value="ECO:0007669"/>
    <property type="project" value="UniProtKB-UniRule"/>
</dbReference>
<dbReference type="GO" id="GO:0140096">
    <property type="term" value="F:catalytic activity, acting on a protein"/>
    <property type="evidence" value="ECO:0007669"/>
    <property type="project" value="UniProtKB-ARBA"/>
</dbReference>
<dbReference type="GO" id="GO:0004820">
    <property type="term" value="F:glycine-tRNA ligase activity"/>
    <property type="evidence" value="ECO:0007669"/>
    <property type="project" value="UniProtKB-UniRule"/>
</dbReference>
<dbReference type="GO" id="GO:0016740">
    <property type="term" value="F:transferase activity"/>
    <property type="evidence" value="ECO:0007669"/>
    <property type="project" value="UniProtKB-ARBA"/>
</dbReference>
<dbReference type="GO" id="GO:0006426">
    <property type="term" value="P:glycyl-tRNA aminoacylation"/>
    <property type="evidence" value="ECO:0007669"/>
    <property type="project" value="UniProtKB-UniRule"/>
</dbReference>
<dbReference type="CDD" id="cd00733">
    <property type="entry name" value="GlyRS_alpha_core"/>
    <property type="match status" value="1"/>
</dbReference>
<dbReference type="FunFam" id="3.30.930.10:FF:000006">
    <property type="entry name" value="Glycine--tRNA ligase alpha subunit"/>
    <property type="match status" value="1"/>
</dbReference>
<dbReference type="Gene3D" id="3.30.930.10">
    <property type="entry name" value="Bira Bifunctional Protein, Domain 2"/>
    <property type="match status" value="1"/>
</dbReference>
<dbReference type="Gene3D" id="1.20.58.180">
    <property type="entry name" value="Class II aaRS and biotin synthetases, domain 2"/>
    <property type="match status" value="1"/>
</dbReference>
<dbReference type="HAMAP" id="MF_00254">
    <property type="entry name" value="Gly_tRNA_synth_alpha"/>
    <property type="match status" value="1"/>
</dbReference>
<dbReference type="InterPro" id="IPR045864">
    <property type="entry name" value="aa-tRNA-synth_II/BPL/LPL"/>
</dbReference>
<dbReference type="InterPro" id="IPR006194">
    <property type="entry name" value="Gly-tRNA-synth_heterodimer"/>
</dbReference>
<dbReference type="InterPro" id="IPR002310">
    <property type="entry name" value="Gly-tRNA_ligase_asu"/>
</dbReference>
<dbReference type="NCBIfam" id="TIGR00388">
    <property type="entry name" value="glyQ"/>
    <property type="match status" value="1"/>
</dbReference>
<dbReference type="NCBIfam" id="NF006827">
    <property type="entry name" value="PRK09348.1"/>
    <property type="match status" value="1"/>
</dbReference>
<dbReference type="PANTHER" id="PTHR30075:SF2">
    <property type="entry name" value="GLYCINE--TRNA LIGASE, CHLOROPLASTIC_MITOCHONDRIAL 2"/>
    <property type="match status" value="1"/>
</dbReference>
<dbReference type="PANTHER" id="PTHR30075">
    <property type="entry name" value="GLYCYL-TRNA SYNTHETASE"/>
    <property type="match status" value="1"/>
</dbReference>
<dbReference type="Pfam" id="PF02091">
    <property type="entry name" value="tRNA-synt_2e"/>
    <property type="match status" value="1"/>
</dbReference>
<dbReference type="PRINTS" id="PR01044">
    <property type="entry name" value="TRNASYNTHGA"/>
</dbReference>
<dbReference type="SUPFAM" id="SSF55681">
    <property type="entry name" value="Class II aaRS and biotin synthetases"/>
    <property type="match status" value="1"/>
</dbReference>
<dbReference type="PROSITE" id="PS50861">
    <property type="entry name" value="AA_TRNA_LIGASE_II_GLYAB"/>
    <property type="match status" value="1"/>
</dbReference>